<proteinExistence type="inferred from homology"/>
<evidence type="ECO:0000255" key="1">
    <source>
        <dbReference type="HAMAP-Rule" id="MF_01024"/>
    </source>
</evidence>
<sequence length="448" mass="48119">MTTPTAIRRLDAADPDFARHLDHLLSWESVSDDSVNQRVLDIIKAVRERGDAALVELTQKFDGLQVASMAELILPRERLELALTRITPVQRQALEKAAERVRSYHEKQKQDSWSYTEADGTVLGQKVTPLDRAGLYVPGGKASYPSSVLMNAIPAKVAGVTEVVMVVPTPRGEINELVLAAACIAGVDRVFTIGGAQAVAALAYGTESVPKVDKVVGPGNIYVATAKRHVFGQVGIDMIAGPSEILVVCDGQTDPDWIAMDLFSQAEHDEDAQAILVSPDAEFLDKVAASITRLLPTMARAAIVETSINGRGALIKVADMAQAIEVANRIAPEHLELSVADPEAWLPHIRHAGAIFMGRHTSEALGDYCAGPNHVLPTSGTARFSSPLGVYDFQKRSSIIYCSPEGASELGKTASVLARGESLSGHARSAEYRITDLDWKTGNLEEGK</sequence>
<reference key="1">
    <citation type="journal article" date="2003" name="Proc. Natl. Acad. Sci. U.S.A.">
        <title>The complete genome sequence of the Arabidopsis and tomato pathogen Pseudomonas syringae pv. tomato DC3000.</title>
        <authorList>
            <person name="Buell C.R."/>
            <person name="Joardar V."/>
            <person name="Lindeberg M."/>
            <person name="Selengut J."/>
            <person name="Paulsen I.T."/>
            <person name="Gwinn M.L."/>
            <person name="Dodson R.J."/>
            <person name="DeBoy R.T."/>
            <person name="Durkin A.S."/>
            <person name="Kolonay J.F."/>
            <person name="Madupu R."/>
            <person name="Daugherty S.C."/>
            <person name="Brinkac L.M."/>
            <person name="Beanan M.J."/>
            <person name="Haft D.H."/>
            <person name="Nelson W.C."/>
            <person name="Davidsen T.M."/>
            <person name="Zafar N."/>
            <person name="Zhou L."/>
            <person name="Liu J."/>
            <person name="Yuan Q."/>
            <person name="Khouri H.M."/>
            <person name="Fedorova N.B."/>
            <person name="Tran B."/>
            <person name="Russell D."/>
            <person name="Berry K.J."/>
            <person name="Utterback T.R."/>
            <person name="Van Aken S.E."/>
            <person name="Feldblyum T.V."/>
            <person name="D'Ascenzo M."/>
            <person name="Deng W.-L."/>
            <person name="Ramos A.R."/>
            <person name="Alfano J.R."/>
            <person name="Cartinhour S."/>
            <person name="Chatterjee A.K."/>
            <person name="Delaney T.P."/>
            <person name="Lazarowitz S.G."/>
            <person name="Martin G.B."/>
            <person name="Schneider D.J."/>
            <person name="Tang X."/>
            <person name="Bender C.L."/>
            <person name="White O."/>
            <person name="Fraser C.M."/>
            <person name="Collmer A."/>
        </authorList>
    </citation>
    <scope>NUCLEOTIDE SEQUENCE [LARGE SCALE GENOMIC DNA]</scope>
    <source>
        <strain>ATCC BAA-871 / DC3000</strain>
    </source>
</reference>
<accession>Q87WV5</accession>
<organism>
    <name type="scientific">Pseudomonas syringae pv. tomato (strain ATCC BAA-871 / DC3000)</name>
    <dbReference type="NCBI Taxonomy" id="223283"/>
    <lineage>
        <taxon>Bacteria</taxon>
        <taxon>Pseudomonadati</taxon>
        <taxon>Pseudomonadota</taxon>
        <taxon>Gammaproteobacteria</taxon>
        <taxon>Pseudomonadales</taxon>
        <taxon>Pseudomonadaceae</taxon>
        <taxon>Pseudomonas</taxon>
    </lineage>
</organism>
<feature type="chain" id="PRO_0000135824" description="Histidinol dehydrogenase">
    <location>
        <begin position="1"/>
        <end position="448"/>
    </location>
</feature>
<feature type="active site" description="Proton acceptor" evidence="1">
    <location>
        <position position="333"/>
    </location>
</feature>
<feature type="active site" description="Proton acceptor" evidence="1">
    <location>
        <position position="334"/>
    </location>
</feature>
<feature type="binding site" evidence="1">
    <location>
        <position position="136"/>
    </location>
    <ligand>
        <name>NAD(+)</name>
        <dbReference type="ChEBI" id="CHEBI:57540"/>
    </ligand>
</feature>
<feature type="binding site" evidence="1">
    <location>
        <position position="197"/>
    </location>
    <ligand>
        <name>NAD(+)</name>
        <dbReference type="ChEBI" id="CHEBI:57540"/>
    </ligand>
</feature>
<feature type="binding site" evidence="1">
    <location>
        <position position="220"/>
    </location>
    <ligand>
        <name>NAD(+)</name>
        <dbReference type="ChEBI" id="CHEBI:57540"/>
    </ligand>
</feature>
<feature type="binding site" evidence="1">
    <location>
        <position position="243"/>
    </location>
    <ligand>
        <name>substrate</name>
    </ligand>
</feature>
<feature type="binding site" evidence="1">
    <location>
        <position position="265"/>
    </location>
    <ligand>
        <name>substrate</name>
    </ligand>
</feature>
<feature type="binding site" evidence="1">
    <location>
        <position position="265"/>
    </location>
    <ligand>
        <name>Zn(2+)</name>
        <dbReference type="ChEBI" id="CHEBI:29105"/>
    </ligand>
</feature>
<feature type="binding site" evidence="1">
    <location>
        <position position="268"/>
    </location>
    <ligand>
        <name>substrate</name>
    </ligand>
</feature>
<feature type="binding site" evidence="1">
    <location>
        <position position="268"/>
    </location>
    <ligand>
        <name>Zn(2+)</name>
        <dbReference type="ChEBI" id="CHEBI:29105"/>
    </ligand>
</feature>
<feature type="binding site" evidence="1">
    <location>
        <position position="334"/>
    </location>
    <ligand>
        <name>substrate</name>
    </ligand>
</feature>
<feature type="binding site" evidence="1">
    <location>
        <position position="367"/>
    </location>
    <ligand>
        <name>substrate</name>
    </ligand>
</feature>
<feature type="binding site" evidence="1">
    <location>
        <position position="367"/>
    </location>
    <ligand>
        <name>Zn(2+)</name>
        <dbReference type="ChEBI" id="CHEBI:29105"/>
    </ligand>
</feature>
<feature type="binding site" evidence="1">
    <location>
        <position position="421"/>
    </location>
    <ligand>
        <name>substrate</name>
    </ligand>
</feature>
<feature type="binding site" evidence="1">
    <location>
        <position position="426"/>
    </location>
    <ligand>
        <name>substrate</name>
    </ligand>
</feature>
<feature type="binding site" evidence="1">
    <location>
        <position position="426"/>
    </location>
    <ligand>
        <name>Zn(2+)</name>
        <dbReference type="ChEBI" id="CHEBI:29105"/>
    </ligand>
</feature>
<protein>
    <recommendedName>
        <fullName evidence="1">Histidinol dehydrogenase</fullName>
        <shortName evidence="1">HDH</shortName>
        <ecNumber evidence="1">1.1.1.23</ecNumber>
    </recommendedName>
</protein>
<name>HISX_PSESM</name>
<dbReference type="EC" id="1.1.1.23" evidence="1"/>
<dbReference type="EMBL" id="AE016853">
    <property type="protein sequence ID" value="AAO57887.1"/>
    <property type="molecule type" value="Genomic_DNA"/>
</dbReference>
<dbReference type="RefSeq" id="NP_794192.1">
    <property type="nucleotide sequence ID" value="NC_004578.1"/>
</dbReference>
<dbReference type="RefSeq" id="WP_005766528.1">
    <property type="nucleotide sequence ID" value="NC_004578.1"/>
</dbReference>
<dbReference type="SMR" id="Q87WV5"/>
<dbReference type="STRING" id="223283.PSPTO_4438"/>
<dbReference type="GeneID" id="1186119"/>
<dbReference type="KEGG" id="pst:PSPTO_4438"/>
<dbReference type="PATRIC" id="fig|223283.9.peg.4554"/>
<dbReference type="eggNOG" id="COG0141">
    <property type="taxonomic scope" value="Bacteria"/>
</dbReference>
<dbReference type="HOGENOM" id="CLU_006732_3_3_6"/>
<dbReference type="OrthoDB" id="9805269at2"/>
<dbReference type="PhylomeDB" id="Q87WV5"/>
<dbReference type="UniPathway" id="UPA00031">
    <property type="reaction ID" value="UER00014"/>
</dbReference>
<dbReference type="Proteomes" id="UP000002515">
    <property type="component" value="Chromosome"/>
</dbReference>
<dbReference type="GO" id="GO:0005829">
    <property type="term" value="C:cytosol"/>
    <property type="evidence" value="ECO:0007669"/>
    <property type="project" value="TreeGrafter"/>
</dbReference>
<dbReference type="GO" id="GO:0004399">
    <property type="term" value="F:histidinol dehydrogenase activity"/>
    <property type="evidence" value="ECO:0007669"/>
    <property type="project" value="UniProtKB-UniRule"/>
</dbReference>
<dbReference type="GO" id="GO:0051287">
    <property type="term" value="F:NAD binding"/>
    <property type="evidence" value="ECO:0007669"/>
    <property type="project" value="InterPro"/>
</dbReference>
<dbReference type="GO" id="GO:0008270">
    <property type="term" value="F:zinc ion binding"/>
    <property type="evidence" value="ECO:0007669"/>
    <property type="project" value="UniProtKB-UniRule"/>
</dbReference>
<dbReference type="GO" id="GO:0000105">
    <property type="term" value="P:L-histidine biosynthetic process"/>
    <property type="evidence" value="ECO:0007669"/>
    <property type="project" value="UniProtKB-UniRule"/>
</dbReference>
<dbReference type="CDD" id="cd06572">
    <property type="entry name" value="Histidinol_dh"/>
    <property type="match status" value="1"/>
</dbReference>
<dbReference type="FunFam" id="3.40.50.1980:FF:000004">
    <property type="entry name" value="Histidinol dehydrogenase"/>
    <property type="match status" value="1"/>
</dbReference>
<dbReference type="FunFam" id="3.40.50.1980:FF:000010">
    <property type="entry name" value="Histidinol dehydrogenase"/>
    <property type="match status" value="1"/>
</dbReference>
<dbReference type="Gene3D" id="1.20.5.1300">
    <property type="match status" value="1"/>
</dbReference>
<dbReference type="Gene3D" id="3.40.50.1980">
    <property type="entry name" value="Nitrogenase molybdenum iron protein domain"/>
    <property type="match status" value="2"/>
</dbReference>
<dbReference type="HAMAP" id="MF_01024">
    <property type="entry name" value="HisD"/>
    <property type="match status" value="1"/>
</dbReference>
<dbReference type="InterPro" id="IPR016161">
    <property type="entry name" value="Ald_DH/histidinol_DH"/>
</dbReference>
<dbReference type="InterPro" id="IPR001692">
    <property type="entry name" value="Histidinol_DH_CS"/>
</dbReference>
<dbReference type="InterPro" id="IPR022695">
    <property type="entry name" value="Histidinol_DH_monofunct"/>
</dbReference>
<dbReference type="InterPro" id="IPR012131">
    <property type="entry name" value="Hstdl_DH"/>
</dbReference>
<dbReference type="NCBIfam" id="TIGR00069">
    <property type="entry name" value="hisD"/>
    <property type="match status" value="1"/>
</dbReference>
<dbReference type="PANTHER" id="PTHR21256:SF2">
    <property type="entry name" value="HISTIDINE BIOSYNTHESIS TRIFUNCTIONAL PROTEIN"/>
    <property type="match status" value="1"/>
</dbReference>
<dbReference type="PANTHER" id="PTHR21256">
    <property type="entry name" value="HISTIDINOL DEHYDROGENASE HDH"/>
    <property type="match status" value="1"/>
</dbReference>
<dbReference type="Pfam" id="PF00815">
    <property type="entry name" value="Histidinol_dh"/>
    <property type="match status" value="1"/>
</dbReference>
<dbReference type="PIRSF" id="PIRSF000099">
    <property type="entry name" value="Histidinol_dh"/>
    <property type="match status" value="1"/>
</dbReference>
<dbReference type="PRINTS" id="PR00083">
    <property type="entry name" value="HOLDHDRGNASE"/>
</dbReference>
<dbReference type="SUPFAM" id="SSF53720">
    <property type="entry name" value="ALDH-like"/>
    <property type="match status" value="1"/>
</dbReference>
<dbReference type="PROSITE" id="PS00611">
    <property type="entry name" value="HISOL_DEHYDROGENASE"/>
    <property type="match status" value="1"/>
</dbReference>
<keyword id="KW-0028">Amino-acid biosynthesis</keyword>
<keyword id="KW-0368">Histidine biosynthesis</keyword>
<keyword id="KW-0479">Metal-binding</keyword>
<keyword id="KW-0520">NAD</keyword>
<keyword id="KW-0560">Oxidoreductase</keyword>
<keyword id="KW-1185">Reference proteome</keyword>
<keyword id="KW-0862">Zinc</keyword>
<comment type="function">
    <text evidence="1">Catalyzes the sequential NAD-dependent oxidations of L-histidinol to L-histidinaldehyde and then to L-histidine.</text>
</comment>
<comment type="catalytic activity">
    <reaction evidence="1">
        <text>L-histidinol + 2 NAD(+) + H2O = L-histidine + 2 NADH + 3 H(+)</text>
        <dbReference type="Rhea" id="RHEA:20641"/>
        <dbReference type="ChEBI" id="CHEBI:15377"/>
        <dbReference type="ChEBI" id="CHEBI:15378"/>
        <dbReference type="ChEBI" id="CHEBI:57540"/>
        <dbReference type="ChEBI" id="CHEBI:57595"/>
        <dbReference type="ChEBI" id="CHEBI:57699"/>
        <dbReference type="ChEBI" id="CHEBI:57945"/>
        <dbReference type="EC" id="1.1.1.23"/>
    </reaction>
</comment>
<comment type="cofactor">
    <cofactor evidence="1">
        <name>Zn(2+)</name>
        <dbReference type="ChEBI" id="CHEBI:29105"/>
    </cofactor>
    <text evidence="1">Binds 1 zinc ion per subunit.</text>
</comment>
<comment type="pathway">
    <text evidence="1">Amino-acid biosynthesis; L-histidine biosynthesis; L-histidine from 5-phospho-alpha-D-ribose 1-diphosphate: step 9/9.</text>
</comment>
<comment type="similarity">
    <text evidence="1">Belongs to the histidinol dehydrogenase family.</text>
</comment>
<gene>
    <name evidence="1" type="primary">hisD</name>
    <name type="ordered locus">PSPTO_4438</name>
</gene>